<keyword id="KW-0903">Direct protein sequencing</keyword>
<keyword id="KW-0964">Secreted</keyword>
<accession>P0C8W7</accession>
<sequence>KIKETNA</sequence>
<protein>
    <recommendedName>
        <fullName>Peptide 1196</fullName>
    </recommendedName>
</protein>
<comment type="subcellular location">
    <subcellularLocation>
        <location>Secreted</location>
    </subcellularLocation>
</comment>
<comment type="tissue specificity">
    <text>Expressed by the venom gland.</text>
</comment>
<comment type="mass spectrometry"/>
<name>P1196_TITST</name>
<dbReference type="GO" id="GO:0005576">
    <property type="term" value="C:extracellular region"/>
    <property type="evidence" value="ECO:0007669"/>
    <property type="project" value="UniProtKB-SubCell"/>
</dbReference>
<organism>
    <name type="scientific">Tityus stigmurus</name>
    <name type="common">Brazilian scorpion</name>
    <dbReference type="NCBI Taxonomy" id="50344"/>
    <lineage>
        <taxon>Eukaryota</taxon>
        <taxon>Metazoa</taxon>
        <taxon>Ecdysozoa</taxon>
        <taxon>Arthropoda</taxon>
        <taxon>Chelicerata</taxon>
        <taxon>Arachnida</taxon>
        <taxon>Scorpiones</taxon>
        <taxon>Buthida</taxon>
        <taxon>Buthoidea</taxon>
        <taxon>Buthidae</taxon>
        <taxon>Tityus</taxon>
    </lineage>
</organism>
<proteinExistence type="evidence at protein level"/>
<feature type="peptide" id="PRO_0000366105" description="Peptide 1196">
    <location>
        <begin position="1"/>
        <end position="7" status="greater than"/>
    </location>
</feature>
<feature type="non-terminal residue">
    <location>
        <position position="7"/>
    </location>
</feature>
<reference key="1">
    <citation type="journal article" date="2007" name="Comp. Biochem. Physiol.">
        <title>Proteomic analysis of the venom from the scorpion Tityus stigmurus: biochemical and physiological comparison with other Tityus species.</title>
        <authorList>
            <person name="Batista C.V.F."/>
            <person name="Roman-Gonzalez S.A."/>
            <person name="Salas-Castillo S.P."/>
            <person name="Zamudio F.Z."/>
            <person name="Gomez-Lagunas F."/>
            <person name="Possani L.D."/>
        </authorList>
    </citation>
    <scope>PROTEIN SEQUENCE</scope>
    <scope>MASS SPECTROMETRY</scope>
    <source>
        <tissue>Venom</tissue>
    </source>
</reference>
<evidence type="ECO:0000269" key="1">
    <source>
    </source>
</evidence>